<gene>
    <name evidence="1" type="primary">dtwd1</name>
    <name evidence="3" type="ORF">TEgg073n17.1</name>
</gene>
<sequence>MSHEKSESCLQEKKHSSSFERFHDGTSLENNLLQNLKLSSQRVLEIAQKKGRSKCPKCNSSRMFYCYTCFVPVESVPSDEIPVVKLPLKIDIIKHPNETDGKSTAVHAKLLAHEDVTVYTYPCVPQYQDQKHEVVLVFPGPDSVSLSDSLLYIRGSGDMQNDSSCEPSLKRPKCSQQYDKSKNEGVEEKKPMHFLKKLIFIDSTWNQTNKIISDERLQGLQQVELMERKTCFWRHQKGTPNTYLSTIEAIYYFMIDYHTIILQKDYKGEYDDLLFFFSFMYRIINDAKKSAGKL</sequence>
<protein>
    <recommendedName>
        <fullName evidence="4">tRNA-uridine aminocarboxypropyltransferase 1</fullName>
        <ecNumber evidence="1">2.5.1.25</ecNumber>
    </recommendedName>
    <alternativeName>
        <fullName evidence="4">DTW domain-containing protein 1</fullName>
    </alternativeName>
</protein>
<feature type="chain" id="PRO_0000308218" description="tRNA-uridine aminocarboxypropyltransferase 1">
    <location>
        <begin position="1"/>
        <end position="294"/>
    </location>
</feature>
<feature type="region of interest" description="Disordered" evidence="2">
    <location>
        <begin position="158"/>
        <end position="185"/>
    </location>
</feature>
<feature type="short sequence motif" description="DXTW">
    <location>
        <begin position="202"/>
        <end position="205"/>
    </location>
</feature>
<accession>Q28I29</accession>
<keyword id="KW-0539">Nucleus</keyword>
<keyword id="KW-1185">Reference proteome</keyword>
<keyword id="KW-0949">S-adenosyl-L-methionine</keyword>
<keyword id="KW-0808">Transferase</keyword>
<keyword id="KW-0819">tRNA processing</keyword>
<evidence type="ECO:0000250" key="1">
    <source>
        <dbReference type="UniProtKB" id="Q8N5C7"/>
    </source>
</evidence>
<evidence type="ECO:0000256" key="2">
    <source>
        <dbReference type="SAM" id="MobiDB-lite"/>
    </source>
</evidence>
<evidence type="ECO:0000303" key="3">
    <source ref="1"/>
</evidence>
<evidence type="ECO:0000305" key="4"/>
<reference key="1">
    <citation type="submission" date="2006-10" db="EMBL/GenBank/DDBJ databases">
        <authorList>
            <consortium name="Sanger Xenopus tropicalis EST/cDNA project"/>
        </authorList>
    </citation>
    <scope>NUCLEOTIDE SEQUENCE [LARGE SCALE MRNA]</scope>
    <source>
        <tissue>Egg</tissue>
    </source>
</reference>
<comment type="function">
    <text evidence="1">Catalyzes the formation of 3-(3-amino-3-carboxypropyl)uridine (acp3U) at position 20 in the D-loop of several cytoplasmic tRNAs (acp3U(20)).</text>
</comment>
<comment type="catalytic activity">
    <reaction evidence="1">
        <text>a uridine in tRNA + S-adenosyl-L-methionine = a 3-[(3S)-3-amino-3-carboxypropyl]uridine in tRNA + S-methyl-5'-thioadenosine + H(+)</text>
        <dbReference type="Rhea" id="RHEA:62432"/>
        <dbReference type="Rhea" id="RHEA-COMP:13339"/>
        <dbReference type="Rhea" id="RHEA-COMP:16092"/>
        <dbReference type="ChEBI" id="CHEBI:15378"/>
        <dbReference type="ChEBI" id="CHEBI:17509"/>
        <dbReference type="ChEBI" id="CHEBI:59789"/>
        <dbReference type="ChEBI" id="CHEBI:65315"/>
        <dbReference type="ChEBI" id="CHEBI:82930"/>
        <dbReference type="EC" id="2.5.1.25"/>
    </reaction>
</comment>
<comment type="subcellular location">
    <subcellularLocation>
        <location evidence="1">Nucleus</location>
    </subcellularLocation>
</comment>
<comment type="similarity">
    <text evidence="4">Belongs to the TDD superfamily. DTWD1 family.</text>
</comment>
<dbReference type="EC" id="2.5.1.25" evidence="1"/>
<dbReference type="EMBL" id="CR760622">
    <property type="protein sequence ID" value="CAJ81336.1"/>
    <property type="molecule type" value="mRNA"/>
</dbReference>
<dbReference type="RefSeq" id="NP_001017188.1">
    <property type="nucleotide sequence ID" value="NM_001017188.2"/>
</dbReference>
<dbReference type="RefSeq" id="XP_017947601.1">
    <property type="nucleotide sequence ID" value="XM_018092112.2"/>
</dbReference>
<dbReference type="FunCoup" id="Q28I29">
    <property type="interactions" value="1852"/>
</dbReference>
<dbReference type="STRING" id="8364.ENSXETP00000054081"/>
<dbReference type="PaxDb" id="8364-ENSXETP00000019301"/>
<dbReference type="GeneID" id="549942"/>
<dbReference type="KEGG" id="xtr:549942"/>
<dbReference type="AGR" id="Xenbase:XB-GENE-944642"/>
<dbReference type="CTD" id="56986"/>
<dbReference type="Xenbase" id="XB-GENE-944642">
    <property type="gene designation" value="dtwd1"/>
</dbReference>
<dbReference type="eggNOG" id="KOG3795">
    <property type="taxonomic scope" value="Eukaryota"/>
</dbReference>
<dbReference type="HOGENOM" id="CLU_069451_0_0_1"/>
<dbReference type="InParanoid" id="Q28I29"/>
<dbReference type="OMA" id="VNAWGLN"/>
<dbReference type="OrthoDB" id="3173at2759"/>
<dbReference type="PhylomeDB" id="Q28I29"/>
<dbReference type="TreeFam" id="TF324733"/>
<dbReference type="Proteomes" id="UP000008143">
    <property type="component" value="Chromosome 3"/>
</dbReference>
<dbReference type="GO" id="GO:0005634">
    <property type="term" value="C:nucleus"/>
    <property type="evidence" value="ECO:0000250"/>
    <property type="project" value="UniProtKB"/>
</dbReference>
<dbReference type="GO" id="GO:0016432">
    <property type="term" value="F:tRNA-uridine aminocarboxypropyltransferase activity"/>
    <property type="evidence" value="ECO:0000250"/>
    <property type="project" value="UniProtKB"/>
</dbReference>
<dbReference type="GO" id="GO:0006400">
    <property type="term" value="P:tRNA modification"/>
    <property type="evidence" value="ECO:0000250"/>
    <property type="project" value="UniProtKB"/>
</dbReference>
<dbReference type="InterPro" id="IPR005636">
    <property type="entry name" value="DTW"/>
</dbReference>
<dbReference type="InterPro" id="IPR051521">
    <property type="entry name" value="tRNA_Mod/Golgi_Maint"/>
</dbReference>
<dbReference type="PANTHER" id="PTHR15627">
    <property type="entry name" value="NATURAL KILLER CELL-SPECIFIC ANTIGEN KLIP1"/>
    <property type="match status" value="1"/>
</dbReference>
<dbReference type="PANTHER" id="PTHR15627:SF8">
    <property type="entry name" value="TRNA-URIDINE AMINOCARBOXYPROPYLTRANSFERASE 1"/>
    <property type="match status" value="1"/>
</dbReference>
<dbReference type="Pfam" id="PF03942">
    <property type="entry name" value="DTW"/>
    <property type="match status" value="1"/>
</dbReference>
<dbReference type="SMART" id="SM01144">
    <property type="entry name" value="DTW"/>
    <property type="match status" value="1"/>
</dbReference>
<organism>
    <name type="scientific">Xenopus tropicalis</name>
    <name type="common">Western clawed frog</name>
    <name type="synonym">Silurana tropicalis</name>
    <dbReference type="NCBI Taxonomy" id="8364"/>
    <lineage>
        <taxon>Eukaryota</taxon>
        <taxon>Metazoa</taxon>
        <taxon>Chordata</taxon>
        <taxon>Craniata</taxon>
        <taxon>Vertebrata</taxon>
        <taxon>Euteleostomi</taxon>
        <taxon>Amphibia</taxon>
        <taxon>Batrachia</taxon>
        <taxon>Anura</taxon>
        <taxon>Pipoidea</taxon>
        <taxon>Pipidae</taxon>
        <taxon>Xenopodinae</taxon>
        <taxon>Xenopus</taxon>
        <taxon>Silurana</taxon>
    </lineage>
</organism>
<proteinExistence type="evidence at transcript level"/>
<name>DTWD1_XENTR</name>